<feature type="chain" id="PRO_0000146545" description="Small ribosomal subunit protein uS10">
    <location>
        <begin position="1"/>
        <end position="102"/>
    </location>
</feature>
<gene>
    <name evidence="1" type="primary">rpsJ</name>
    <name type="ordered locus">LA_0738</name>
</gene>
<comment type="function">
    <text evidence="1">Involved in the binding of tRNA to the ribosomes.</text>
</comment>
<comment type="subunit">
    <text evidence="1">Part of the 30S ribosomal subunit.</text>
</comment>
<comment type="similarity">
    <text evidence="1">Belongs to the universal ribosomal protein uS10 family.</text>
</comment>
<reference key="1">
    <citation type="journal article" date="2000" name="FEMS Microbiol. Lett.">
        <title>Characterization of the Leptospira interrogans S10-spc-alpha operon.</title>
        <authorList>
            <person name="Zuerner R.L."/>
            <person name="Hartskeerl R.A."/>
            <person name="van de Kemp H."/>
            <person name="Bal A.E."/>
        </authorList>
    </citation>
    <scope>NUCLEOTIDE SEQUENCE [GENOMIC DNA]</scope>
    <source>
        <strain>Lai / Serogroup Icterohaemorrhagiae / Serovar lai</strain>
    </source>
</reference>
<reference key="2">
    <citation type="journal article" date="2003" name="Nature">
        <title>Unique physiological and pathogenic features of Leptospira interrogans revealed by whole-genome sequencing.</title>
        <authorList>
            <person name="Ren S.-X."/>
            <person name="Fu G."/>
            <person name="Jiang X.-G."/>
            <person name="Zeng R."/>
            <person name="Miao Y.-G."/>
            <person name="Xu H."/>
            <person name="Zhang Y.-X."/>
            <person name="Xiong H."/>
            <person name="Lu G."/>
            <person name="Lu L.-F."/>
            <person name="Jiang H.-Q."/>
            <person name="Jia J."/>
            <person name="Tu Y.-F."/>
            <person name="Jiang J.-X."/>
            <person name="Gu W.-Y."/>
            <person name="Zhang Y.-Q."/>
            <person name="Cai Z."/>
            <person name="Sheng H.-H."/>
            <person name="Yin H.-F."/>
            <person name="Zhang Y."/>
            <person name="Zhu G.-F."/>
            <person name="Wan M."/>
            <person name="Huang H.-L."/>
            <person name="Qian Z."/>
            <person name="Wang S.-Y."/>
            <person name="Ma W."/>
            <person name="Yao Z.-J."/>
            <person name="Shen Y."/>
            <person name="Qiang B.-Q."/>
            <person name="Xia Q.-C."/>
            <person name="Guo X.-K."/>
            <person name="Danchin A."/>
            <person name="Saint Girons I."/>
            <person name="Somerville R.L."/>
            <person name="Wen Y.-M."/>
            <person name="Shi M.-H."/>
            <person name="Chen Z."/>
            <person name="Xu J.-G."/>
            <person name="Zhao G.-P."/>
        </authorList>
    </citation>
    <scope>NUCLEOTIDE SEQUENCE [LARGE SCALE GENOMIC DNA]</scope>
    <source>
        <strain>56601</strain>
    </source>
</reference>
<keyword id="KW-1185">Reference proteome</keyword>
<keyword id="KW-0687">Ribonucleoprotein</keyword>
<keyword id="KW-0689">Ribosomal protein</keyword>
<name>RS10_LEPIN</name>
<sequence>MAGQKIRVKLKAFDHRLIDQSTYEIVATAKRTGATVSGPIPLPTKKEIYTVLRSPHVNKKSREQFELKTHKRLIDILDTNEDTVEALMKLQLPAGVSVDIKS</sequence>
<accession>Q9XD37</accession>
<proteinExistence type="inferred from homology"/>
<organism>
    <name type="scientific">Leptospira interrogans serogroup Icterohaemorrhagiae serovar Lai (strain 56601)</name>
    <dbReference type="NCBI Taxonomy" id="189518"/>
    <lineage>
        <taxon>Bacteria</taxon>
        <taxon>Pseudomonadati</taxon>
        <taxon>Spirochaetota</taxon>
        <taxon>Spirochaetia</taxon>
        <taxon>Leptospirales</taxon>
        <taxon>Leptospiraceae</taxon>
        <taxon>Leptospira</taxon>
    </lineage>
</organism>
<dbReference type="EMBL" id="AF115283">
    <property type="protein sequence ID" value="AAD40582.1"/>
    <property type="molecule type" value="Genomic_DNA"/>
</dbReference>
<dbReference type="EMBL" id="AE010300">
    <property type="protein sequence ID" value="AAN47937.1"/>
    <property type="molecule type" value="Genomic_DNA"/>
</dbReference>
<dbReference type="RefSeq" id="NP_710919.1">
    <property type="nucleotide sequence ID" value="NC_004342.2"/>
</dbReference>
<dbReference type="RefSeq" id="WP_000918607.1">
    <property type="nucleotide sequence ID" value="NC_004342.2"/>
</dbReference>
<dbReference type="SMR" id="Q9XD37"/>
<dbReference type="FunCoup" id="Q9XD37">
    <property type="interactions" value="552"/>
</dbReference>
<dbReference type="STRING" id="189518.LA_0738"/>
<dbReference type="PaxDb" id="189518-LA_0738"/>
<dbReference type="EnsemblBacteria" id="AAN47937">
    <property type="protein sequence ID" value="AAN47937"/>
    <property type="gene ID" value="LA_0738"/>
</dbReference>
<dbReference type="GeneID" id="61172949"/>
<dbReference type="KEGG" id="lil:LA_0738"/>
<dbReference type="PATRIC" id="fig|189518.3.peg.742"/>
<dbReference type="HOGENOM" id="CLU_122625_1_3_12"/>
<dbReference type="InParanoid" id="Q9XD37"/>
<dbReference type="OrthoDB" id="9804464at2"/>
<dbReference type="PRO" id="PR:Q9XD37"/>
<dbReference type="Proteomes" id="UP000001408">
    <property type="component" value="Chromosome I"/>
</dbReference>
<dbReference type="GO" id="GO:0015935">
    <property type="term" value="C:small ribosomal subunit"/>
    <property type="evidence" value="ECO:0000318"/>
    <property type="project" value="GO_Central"/>
</dbReference>
<dbReference type="GO" id="GO:0003735">
    <property type="term" value="F:structural constituent of ribosome"/>
    <property type="evidence" value="ECO:0000318"/>
    <property type="project" value="GO_Central"/>
</dbReference>
<dbReference type="GO" id="GO:0000049">
    <property type="term" value="F:tRNA binding"/>
    <property type="evidence" value="ECO:0007669"/>
    <property type="project" value="UniProtKB-UniRule"/>
</dbReference>
<dbReference type="GO" id="GO:0006412">
    <property type="term" value="P:translation"/>
    <property type="evidence" value="ECO:0007669"/>
    <property type="project" value="UniProtKB-UniRule"/>
</dbReference>
<dbReference type="FunFam" id="3.30.70.600:FF:000001">
    <property type="entry name" value="30S ribosomal protein S10"/>
    <property type="match status" value="1"/>
</dbReference>
<dbReference type="Gene3D" id="3.30.70.600">
    <property type="entry name" value="Ribosomal protein S10 domain"/>
    <property type="match status" value="1"/>
</dbReference>
<dbReference type="HAMAP" id="MF_00508">
    <property type="entry name" value="Ribosomal_uS10"/>
    <property type="match status" value="1"/>
</dbReference>
<dbReference type="InterPro" id="IPR001848">
    <property type="entry name" value="Ribosomal_uS10"/>
</dbReference>
<dbReference type="InterPro" id="IPR018268">
    <property type="entry name" value="Ribosomal_uS10_CS"/>
</dbReference>
<dbReference type="InterPro" id="IPR027486">
    <property type="entry name" value="Ribosomal_uS10_dom"/>
</dbReference>
<dbReference type="InterPro" id="IPR036838">
    <property type="entry name" value="Ribosomal_uS10_dom_sf"/>
</dbReference>
<dbReference type="NCBIfam" id="NF001861">
    <property type="entry name" value="PRK00596.1"/>
    <property type="match status" value="1"/>
</dbReference>
<dbReference type="NCBIfam" id="TIGR01049">
    <property type="entry name" value="rpsJ_bact"/>
    <property type="match status" value="1"/>
</dbReference>
<dbReference type="PANTHER" id="PTHR11700">
    <property type="entry name" value="30S RIBOSOMAL PROTEIN S10 FAMILY MEMBER"/>
    <property type="match status" value="1"/>
</dbReference>
<dbReference type="Pfam" id="PF00338">
    <property type="entry name" value="Ribosomal_S10"/>
    <property type="match status" value="1"/>
</dbReference>
<dbReference type="PRINTS" id="PR00971">
    <property type="entry name" value="RIBOSOMALS10"/>
</dbReference>
<dbReference type="SMART" id="SM01403">
    <property type="entry name" value="Ribosomal_S10"/>
    <property type="match status" value="1"/>
</dbReference>
<dbReference type="SUPFAM" id="SSF54999">
    <property type="entry name" value="Ribosomal protein S10"/>
    <property type="match status" value="1"/>
</dbReference>
<dbReference type="PROSITE" id="PS00361">
    <property type="entry name" value="RIBOSOMAL_S10"/>
    <property type="match status" value="1"/>
</dbReference>
<protein>
    <recommendedName>
        <fullName evidence="1">Small ribosomal subunit protein uS10</fullName>
    </recommendedName>
    <alternativeName>
        <fullName evidence="2">30S ribosomal protein S10</fullName>
    </alternativeName>
</protein>
<evidence type="ECO:0000255" key="1">
    <source>
        <dbReference type="HAMAP-Rule" id="MF_00508"/>
    </source>
</evidence>
<evidence type="ECO:0000305" key="2"/>